<gene>
    <name evidence="1" type="primary">rsmH</name>
    <name type="synonym">mraW</name>
    <name type="ordered locus">Lferr_0393</name>
</gene>
<sequence>MRSANEPDATHVAVLLAETIVALRPALHTGAAVRCVDATGGRGGHSAALLAELGAADTLLILDRDPSAIAALRARFAQDSRVYIRQARFSQLAEVLAALEWERVDAILADLGVSSPQLDEAARGFSFLRDGPLDMRMDPGADRSAAEWLATATEADMTRVLREYGEERFARPIARAILRAREQAPITRTLQLAELIAQVLPRHETGQHPATRSFQGIRIFINRELEELEAFLPQAMNALRAGGRLAVISFHSLEDRLVKRFFRADDYRISADVPLRASELPPLPWHPAGKALRAGPRETRDNPRSRSAVLRVAERSERHAA</sequence>
<organism>
    <name type="scientific">Acidithiobacillus ferrooxidans (strain ATCC 53993 / BNL-5-31)</name>
    <name type="common">Leptospirillum ferrooxidans (ATCC 53993)</name>
    <dbReference type="NCBI Taxonomy" id="380394"/>
    <lineage>
        <taxon>Bacteria</taxon>
        <taxon>Pseudomonadati</taxon>
        <taxon>Pseudomonadota</taxon>
        <taxon>Acidithiobacillia</taxon>
        <taxon>Acidithiobacillales</taxon>
        <taxon>Acidithiobacillaceae</taxon>
        <taxon>Acidithiobacillus</taxon>
    </lineage>
</organism>
<name>RSMH_ACIF5</name>
<proteinExistence type="inferred from homology"/>
<evidence type="ECO:0000255" key="1">
    <source>
        <dbReference type="HAMAP-Rule" id="MF_01007"/>
    </source>
</evidence>
<evidence type="ECO:0000256" key="2">
    <source>
        <dbReference type="SAM" id="MobiDB-lite"/>
    </source>
</evidence>
<feature type="chain" id="PRO_0000386682" description="Ribosomal RNA small subunit methyltransferase H">
    <location>
        <begin position="1"/>
        <end position="321"/>
    </location>
</feature>
<feature type="region of interest" description="Disordered" evidence="2">
    <location>
        <begin position="286"/>
        <end position="321"/>
    </location>
</feature>
<feature type="compositionally biased region" description="Basic and acidic residues" evidence="2">
    <location>
        <begin position="295"/>
        <end position="304"/>
    </location>
</feature>
<feature type="compositionally biased region" description="Basic and acidic residues" evidence="2">
    <location>
        <begin position="312"/>
        <end position="321"/>
    </location>
</feature>
<feature type="binding site" evidence="1">
    <location>
        <begin position="43"/>
        <end position="45"/>
    </location>
    <ligand>
        <name>S-adenosyl-L-methionine</name>
        <dbReference type="ChEBI" id="CHEBI:59789"/>
    </ligand>
</feature>
<feature type="binding site" evidence="1">
    <location>
        <position position="63"/>
    </location>
    <ligand>
        <name>S-adenosyl-L-methionine</name>
        <dbReference type="ChEBI" id="CHEBI:59789"/>
    </ligand>
</feature>
<feature type="binding site" evidence="1">
    <location>
        <position position="89"/>
    </location>
    <ligand>
        <name>S-adenosyl-L-methionine</name>
        <dbReference type="ChEBI" id="CHEBI:59789"/>
    </ligand>
</feature>
<feature type="binding site" evidence="1">
    <location>
        <position position="110"/>
    </location>
    <ligand>
        <name>S-adenosyl-L-methionine</name>
        <dbReference type="ChEBI" id="CHEBI:59789"/>
    </ligand>
</feature>
<feature type="binding site" evidence="1">
    <location>
        <position position="117"/>
    </location>
    <ligand>
        <name>S-adenosyl-L-methionine</name>
        <dbReference type="ChEBI" id="CHEBI:59789"/>
    </ligand>
</feature>
<dbReference type="EC" id="2.1.1.199" evidence="1"/>
<dbReference type="EMBL" id="CP001132">
    <property type="protein sequence ID" value="ACH82647.1"/>
    <property type="molecule type" value="Genomic_DNA"/>
</dbReference>
<dbReference type="RefSeq" id="WP_009562424.1">
    <property type="nucleotide sequence ID" value="NC_011206.1"/>
</dbReference>
<dbReference type="SMR" id="B5ELD1"/>
<dbReference type="GeneID" id="65279599"/>
<dbReference type="KEGG" id="afe:Lferr_0393"/>
<dbReference type="eggNOG" id="COG0275">
    <property type="taxonomic scope" value="Bacteria"/>
</dbReference>
<dbReference type="HOGENOM" id="CLU_038422_2_0_6"/>
<dbReference type="GO" id="GO:0005737">
    <property type="term" value="C:cytoplasm"/>
    <property type="evidence" value="ECO:0007669"/>
    <property type="project" value="UniProtKB-SubCell"/>
</dbReference>
<dbReference type="GO" id="GO:0071424">
    <property type="term" value="F:rRNA (cytosine-N4-)-methyltransferase activity"/>
    <property type="evidence" value="ECO:0007669"/>
    <property type="project" value="UniProtKB-UniRule"/>
</dbReference>
<dbReference type="GO" id="GO:0070475">
    <property type="term" value="P:rRNA base methylation"/>
    <property type="evidence" value="ECO:0007669"/>
    <property type="project" value="UniProtKB-UniRule"/>
</dbReference>
<dbReference type="FunFam" id="1.10.150.170:FF:000001">
    <property type="entry name" value="Ribosomal RNA small subunit methyltransferase H"/>
    <property type="match status" value="1"/>
</dbReference>
<dbReference type="Gene3D" id="1.10.150.170">
    <property type="entry name" value="Putative methyltransferase TM0872, insert domain"/>
    <property type="match status" value="1"/>
</dbReference>
<dbReference type="Gene3D" id="3.40.50.150">
    <property type="entry name" value="Vaccinia Virus protein VP39"/>
    <property type="match status" value="1"/>
</dbReference>
<dbReference type="HAMAP" id="MF_01007">
    <property type="entry name" value="16SrRNA_methyltr_H"/>
    <property type="match status" value="1"/>
</dbReference>
<dbReference type="InterPro" id="IPR002903">
    <property type="entry name" value="RsmH"/>
</dbReference>
<dbReference type="InterPro" id="IPR023397">
    <property type="entry name" value="SAM-dep_MeTrfase_MraW_recog"/>
</dbReference>
<dbReference type="InterPro" id="IPR029063">
    <property type="entry name" value="SAM-dependent_MTases_sf"/>
</dbReference>
<dbReference type="NCBIfam" id="TIGR00006">
    <property type="entry name" value="16S rRNA (cytosine(1402)-N(4))-methyltransferase RsmH"/>
    <property type="match status" value="1"/>
</dbReference>
<dbReference type="PANTHER" id="PTHR11265:SF0">
    <property type="entry name" value="12S RRNA N4-METHYLCYTIDINE METHYLTRANSFERASE"/>
    <property type="match status" value="1"/>
</dbReference>
<dbReference type="PANTHER" id="PTHR11265">
    <property type="entry name" value="S-ADENOSYL-METHYLTRANSFERASE MRAW"/>
    <property type="match status" value="1"/>
</dbReference>
<dbReference type="Pfam" id="PF01795">
    <property type="entry name" value="Methyltransf_5"/>
    <property type="match status" value="1"/>
</dbReference>
<dbReference type="PIRSF" id="PIRSF004486">
    <property type="entry name" value="MraW"/>
    <property type="match status" value="1"/>
</dbReference>
<dbReference type="SUPFAM" id="SSF81799">
    <property type="entry name" value="Putative methyltransferase TM0872, insert domain"/>
    <property type="match status" value="1"/>
</dbReference>
<dbReference type="SUPFAM" id="SSF53335">
    <property type="entry name" value="S-adenosyl-L-methionine-dependent methyltransferases"/>
    <property type="match status" value="1"/>
</dbReference>
<keyword id="KW-0963">Cytoplasm</keyword>
<keyword id="KW-0489">Methyltransferase</keyword>
<keyword id="KW-0698">rRNA processing</keyword>
<keyword id="KW-0949">S-adenosyl-L-methionine</keyword>
<keyword id="KW-0808">Transferase</keyword>
<protein>
    <recommendedName>
        <fullName evidence="1">Ribosomal RNA small subunit methyltransferase H</fullName>
        <ecNumber evidence="1">2.1.1.199</ecNumber>
    </recommendedName>
    <alternativeName>
        <fullName evidence="1">16S rRNA m(4)C1402 methyltransferase</fullName>
    </alternativeName>
    <alternativeName>
        <fullName evidence="1">rRNA (cytosine-N(4)-)-methyltransferase RsmH</fullName>
    </alternativeName>
</protein>
<comment type="function">
    <text evidence="1">Specifically methylates the N4 position of cytidine in position 1402 (C1402) of 16S rRNA.</text>
</comment>
<comment type="catalytic activity">
    <reaction evidence="1">
        <text>cytidine(1402) in 16S rRNA + S-adenosyl-L-methionine = N(4)-methylcytidine(1402) in 16S rRNA + S-adenosyl-L-homocysteine + H(+)</text>
        <dbReference type="Rhea" id="RHEA:42928"/>
        <dbReference type="Rhea" id="RHEA-COMP:10286"/>
        <dbReference type="Rhea" id="RHEA-COMP:10287"/>
        <dbReference type="ChEBI" id="CHEBI:15378"/>
        <dbReference type="ChEBI" id="CHEBI:57856"/>
        <dbReference type="ChEBI" id="CHEBI:59789"/>
        <dbReference type="ChEBI" id="CHEBI:74506"/>
        <dbReference type="ChEBI" id="CHEBI:82748"/>
        <dbReference type="EC" id="2.1.1.199"/>
    </reaction>
</comment>
<comment type="subcellular location">
    <subcellularLocation>
        <location evidence="1">Cytoplasm</location>
    </subcellularLocation>
</comment>
<comment type="similarity">
    <text evidence="1">Belongs to the methyltransferase superfamily. RsmH family.</text>
</comment>
<reference key="1">
    <citation type="submission" date="2008-08" db="EMBL/GenBank/DDBJ databases">
        <title>Complete sequence of Acidithiobacillus ferrooxidans ATCC 53993.</title>
        <authorList>
            <person name="Lucas S."/>
            <person name="Copeland A."/>
            <person name="Lapidus A."/>
            <person name="Glavina del Rio T."/>
            <person name="Dalin E."/>
            <person name="Tice H."/>
            <person name="Bruce D."/>
            <person name="Goodwin L."/>
            <person name="Pitluck S."/>
            <person name="Sims D."/>
            <person name="Brettin T."/>
            <person name="Detter J.C."/>
            <person name="Han C."/>
            <person name="Kuske C.R."/>
            <person name="Larimer F."/>
            <person name="Land M."/>
            <person name="Hauser L."/>
            <person name="Kyrpides N."/>
            <person name="Lykidis A."/>
            <person name="Borole A.P."/>
        </authorList>
    </citation>
    <scope>NUCLEOTIDE SEQUENCE [LARGE SCALE GENOMIC DNA]</scope>
    <source>
        <strain>ATCC 53993 / BNL-5-31</strain>
    </source>
</reference>
<accession>B5ELD1</accession>